<protein>
    <recommendedName>
        <fullName>Uncharacterized protein MJ1282.2</fullName>
    </recommendedName>
</protein>
<dbReference type="EMBL" id="L77117">
    <property type="protein sequence ID" value="AAB99299.1"/>
    <property type="molecule type" value="Genomic_DNA"/>
</dbReference>
<dbReference type="STRING" id="243232.MJ_1282.2"/>
<dbReference type="PaxDb" id="243232-MJ_1282.2"/>
<dbReference type="EnsemblBacteria" id="AAB99299">
    <property type="protein sequence ID" value="AAB99299"/>
    <property type="gene ID" value="MJ_1282.2"/>
</dbReference>
<dbReference type="KEGG" id="mja:MJ_1282.2"/>
<dbReference type="eggNOG" id="arCOG08268">
    <property type="taxonomic scope" value="Archaea"/>
</dbReference>
<dbReference type="HOGENOM" id="CLU_1500293_0_0_2"/>
<dbReference type="InParanoid" id="P81319"/>
<dbReference type="Proteomes" id="UP000000805">
    <property type="component" value="Chromosome"/>
</dbReference>
<organism>
    <name type="scientific">Methanocaldococcus jannaschii (strain ATCC 43067 / DSM 2661 / JAL-1 / JCM 10045 / NBRC 100440)</name>
    <name type="common">Methanococcus jannaschii</name>
    <dbReference type="NCBI Taxonomy" id="243232"/>
    <lineage>
        <taxon>Archaea</taxon>
        <taxon>Methanobacteriati</taxon>
        <taxon>Methanobacteriota</taxon>
        <taxon>Methanomada group</taxon>
        <taxon>Methanococci</taxon>
        <taxon>Methanococcales</taxon>
        <taxon>Methanocaldococcaceae</taxon>
        <taxon>Methanocaldococcus</taxon>
    </lineage>
</organism>
<reference key="1">
    <citation type="journal article" date="1996" name="Science">
        <title>Complete genome sequence of the methanogenic archaeon, Methanococcus jannaschii.</title>
        <authorList>
            <person name="Bult C.J."/>
            <person name="White O."/>
            <person name="Olsen G.J."/>
            <person name="Zhou L."/>
            <person name="Fleischmann R.D."/>
            <person name="Sutton G.G."/>
            <person name="Blake J.A."/>
            <person name="FitzGerald L.M."/>
            <person name="Clayton R.A."/>
            <person name="Gocayne J.D."/>
            <person name="Kerlavage A.R."/>
            <person name="Dougherty B.A."/>
            <person name="Tomb J.-F."/>
            <person name="Adams M.D."/>
            <person name="Reich C.I."/>
            <person name="Overbeek R."/>
            <person name="Kirkness E.F."/>
            <person name="Weinstock K.G."/>
            <person name="Merrick J.M."/>
            <person name="Glodek A."/>
            <person name="Scott J.L."/>
            <person name="Geoghagen N.S.M."/>
            <person name="Weidman J.F."/>
            <person name="Fuhrmann J.L."/>
            <person name="Nguyen D."/>
            <person name="Utterback T.R."/>
            <person name="Kelley J.M."/>
            <person name="Peterson J.D."/>
            <person name="Sadow P.W."/>
            <person name="Hanna M.C."/>
            <person name="Cotton M.D."/>
            <person name="Roberts K.M."/>
            <person name="Hurst M.A."/>
            <person name="Kaine B.P."/>
            <person name="Borodovsky M."/>
            <person name="Klenk H.-P."/>
            <person name="Fraser C.M."/>
            <person name="Smith H.O."/>
            <person name="Woese C.R."/>
            <person name="Venter J.C."/>
        </authorList>
    </citation>
    <scope>NUCLEOTIDE SEQUENCE [LARGE SCALE GENOMIC DNA]</scope>
    <source>
        <strain>ATCC 43067 / DSM 2661 / JAL-1 / JCM 10045 / NBRC 100440</strain>
    </source>
</reference>
<feature type="chain" id="PRO_0000107251" description="Uncharacterized protein MJ1282.2">
    <location>
        <begin position="1"/>
        <end position="179"/>
    </location>
</feature>
<name>YC8B_METJA</name>
<accession>P81319</accession>
<gene>
    <name type="ordered locus">MJ1282.2</name>
</gene>
<keyword id="KW-1185">Reference proteome</keyword>
<proteinExistence type="predicted"/>
<sequence length="179" mass="20501">MAKDVFNNSLAENVSFINTSGYYNNSENVTYINMSMNGSFSGILYVKSSYKNYTITINESGNFVFNDTTSPIEVELLNNYSDVILNYNLNESINNFSDTSYLILNESCKNSYFNVIYGNSPMLYVSLHDEDFNHNITIFNPQKGISSKGFVLTDIFITTPRMFYSSLNNSFEYQSWNIN</sequence>